<evidence type="ECO:0000255" key="1">
    <source>
        <dbReference type="HAMAP-Rule" id="MF_00097"/>
    </source>
</evidence>
<sequence length="212" mass="22993">MFQSKDLNVYFICGTQDIPEGRTIQEVLKEALEGGITLYQFREKGNGAKTGQDKVALAKELQALCKSYNVPFIVNDDVALAEEIDADGIHVGQDDEAVDDFNNRFEGKIIGLSIGNLEELNASDLTYVDYIGVGPIFATPSKDDASEPVGPKMIETLRKEVGDLPIVAIGGISLDNVQEVAKTSADGVSVISAIARSPHVTETVHKFLQYFK</sequence>
<gene>
    <name evidence="1" type="primary">thiE</name>
    <name type="ordered locus">Sca_1593</name>
</gene>
<reference key="1">
    <citation type="submission" date="1998-11" db="EMBL/GenBank/DDBJ databases">
        <title>Identification of an operon involved in thiamin biosynthesis in Staphylococcus carnosus TM300.</title>
        <authorList>
            <person name="Krismer B."/>
            <person name="Goetz F."/>
        </authorList>
    </citation>
    <scope>NUCLEOTIDE SEQUENCE [GENOMIC DNA]</scope>
</reference>
<reference key="2">
    <citation type="journal article" date="2009" name="Appl. Environ. Microbiol.">
        <title>Genome analysis of the meat starter culture bacterium Staphylococcus carnosus TM300.</title>
        <authorList>
            <person name="Rosenstein R."/>
            <person name="Nerz C."/>
            <person name="Biswas L."/>
            <person name="Resch A."/>
            <person name="Raddatz G."/>
            <person name="Schuster S.C."/>
            <person name="Goetz F."/>
        </authorList>
    </citation>
    <scope>NUCLEOTIDE SEQUENCE [LARGE SCALE GENOMIC DNA]</scope>
    <source>
        <strain>TM300</strain>
    </source>
</reference>
<name>THIE_STACT</name>
<proteinExistence type="inferred from homology"/>
<feature type="chain" id="PRO_0000157050" description="Thiamine-phosphate synthase">
    <location>
        <begin position="1"/>
        <end position="212"/>
    </location>
</feature>
<feature type="binding site" evidence="1">
    <location>
        <begin position="40"/>
        <end position="44"/>
    </location>
    <ligand>
        <name>4-amino-2-methyl-5-(diphosphooxymethyl)pyrimidine</name>
        <dbReference type="ChEBI" id="CHEBI:57841"/>
    </ligand>
</feature>
<feature type="binding site" evidence="1">
    <location>
        <position position="75"/>
    </location>
    <ligand>
        <name>4-amino-2-methyl-5-(diphosphooxymethyl)pyrimidine</name>
        <dbReference type="ChEBI" id="CHEBI:57841"/>
    </ligand>
</feature>
<feature type="binding site" evidence="1">
    <location>
        <position position="76"/>
    </location>
    <ligand>
        <name>Mg(2+)</name>
        <dbReference type="ChEBI" id="CHEBI:18420"/>
    </ligand>
</feature>
<feature type="binding site" evidence="1">
    <location>
        <position position="95"/>
    </location>
    <ligand>
        <name>Mg(2+)</name>
        <dbReference type="ChEBI" id="CHEBI:18420"/>
    </ligand>
</feature>
<feature type="binding site" evidence="1">
    <location>
        <position position="113"/>
    </location>
    <ligand>
        <name>4-amino-2-methyl-5-(diphosphooxymethyl)pyrimidine</name>
        <dbReference type="ChEBI" id="CHEBI:57841"/>
    </ligand>
</feature>
<feature type="binding site" evidence="1">
    <location>
        <begin position="139"/>
        <end position="141"/>
    </location>
    <ligand>
        <name>2-[(2R,5Z)-2-carboxy-4-methylthiazol-5(2H)-ylidene]ethyl phosphate</name>
        <dbReference type="ChEBI" id="CHEBI:62899"/>
    </ligand>
</feature>
<feature type="binding site" evidence="1">
    <location>
        <position position="142"/>
    </location>
    <ligand>
        <name>4-amino-2-methyl-5-(diphosphooxymethyl)pyrimidine</name>
        <dbReference type="ChEBI" id="CHEBI:57841"/>
    </ligand>
</feature>
<feature type="binding site" evidence="1">
    <location>
        <position position="171"/>
    </location>
    <ligand>
        <name>2-[(2R,5Z)-2-carboxy-4-methylthiazol-5(2H)-ylidene]ethyl phosphate</name>
        <dbReference type="ChEBI" id="CHEBI:62899"/>
    </ligand>
</feature>
<feature type="binding site" evidence="1">
    <location>
        <begin position="191"/>
        <end position="192"/>
    </location>
    <ligand>
        <name>2-[(2R,5Z)-2-carboxy-4-methylthiazol-5(2H)-ylidene]ethyl phosphate</name>
        <dbReference type="ChEBI" id="CHEBI:62899"/>
    </ligand>
</feature>
<keyword id="KW-0460">Magnesium</keyword>
<keyword id="KW-0479">Metal-binding</keyword>
<keyword id="KW-1185">Reference proteome</keyword>
<keyword id="KW-0784">Thiamine biosynthesis</keyword>
<keyword id="KW-0808">Transferase</keyword>
<protein>
    <recommendedName>
        <fullName evidence="1">Thiamine-phosphate synthase</fullName>
        <shortName evidence="1">TP synthase</shortName>
        <shortName evidence="1">TPS</shortName>
        <ecNumber evidence="1">2.5.1.3</ecNumber>
    </recommendedName>
    <alternativeName>
        <fullName evidence="1">Thiamine-phosphate pyrophosphorylase</fullName>
        <shortName evidence="1">TMP pyrophosphorylase</shortName>
        <shortName evidence="1">TMP-PPase</shortName>
    </alternativeName>
</protein>
<accession>Q9RGS5</accession>
<accession>B9DMF5</accession>
<comment type="function">
    <text evidence="1">Condenses 4-methyl-5-(beta-hydroxyethyl)thiazole monophosphate (THZ-P) and 2-methyl-4-amino-5-hydroxymethyl pyrimidine pyrophosphate (HMP-PP) to form thiamine monophosphate (TMP).</text>
</comment>
<comment type="catalytic activity">
    <reaction evidence="1">
        <text>2-[(2R,5Z)-2-carboxy-4-methylthiazol-5(2H)-ylidene]ethyl phosphate + 4-amino-2-methyl-5-(diphosphooxymethyl)pyrimidine + 2 H(+) = thiamine phosphate + CO2 + diphosphate</text>
        <dbReference type="Rhea" id="RHEA:47844"/>
        <dbReference type="ChEBI" id="CHEBI:15378"/>
        <dbReference type="ChEBI" id="CHEBI:16526"/>
        <dbReference type="ChEBI" id="CHEBI:33019"/>
        <dbReference type="ChEBI" id="CHEBI:37575"/>
        <dbReference type="ChEBI" id="CHEBI:57841"/>
        <dbReference type="ChEBI" id="CHEBI:62899"/>
        <dbReference type="EC" id="2.5.1.3"/>
    </reaction>
</comment>
<comment type="catalytic activity">
    <reaction evidence="1">
        <text>2-(2-carboxy-4-methylthiazol-5-yl)ethyl phosphate + 4-amino-2-methyl-5-(diphosphooxymethyl)pyrimidine + 2 H(+) = thiamine phosphate + CO2 + diphosphate</text>
        <dbReference type="Rhea" id="RHEA:47848"/>
        <dbReference type="ChEBI" id="CHEBI:15378"/>
        <dbReference type="ChEBI" id="CHEBI:16526"/>
        <dbReference type="ChEBI" id="CHEBI:33019"/>
        <dbReference type="ChEBI" id="CHEBI:37575"/>
        <dbReference type="ChEBI" id="CHEBI:57841"/>
        <dbReference type="ChEBI" id="CHEBI:62890"/>
        <dbReference type="EC" id="2.5.1.3"/>
    </reaction>
</comment>
<comment type="catalytic activity">
    <reaction evidence="1">
        <text>4-methyl-5-(2-phosphooxyethyl)-thiazole + 4-amino-2-methyl-5-(diphosphooxymethyl)pyrimidine + H(+) = thiamine phosphate + diphosphate</text>
        <dbReference type="Rhea" id="RHEA:22328"/>
        <dbReference type="ChEBI" id="CHEBI:15378"/>
        <dbReference type="ChEBI" id="CHEBI:33019"/>
        <dbReference type="ChEBI" id="CHEBI:37575"/>
        <dbReference type="ChEBI" id="CHEBI:57841"/>
        <dbReference type="ChEBI" id="CHEBI:58296"/>
        <dbReference type="EC" id="2.5.1.3"/>
    </reaction>
</comment>
<comment type="cofactor">
    <cofactor evidence="1">
        <name>Mg(2+)</name>
        <dbReference type="ChEBI" id="CHEBI:18420"/>
    </cofactor>
    <text evidence="1">Binds 1 Mg(2+) ion per subunit.</text>
</comment>
<comment type="pathway">
    <text evidence="1">Cofactor biosynthesis; thiamine diphosphate biosynthesis; thiamine phosphate from 4-amino-2-methyl-5-diphosphomethylpyrimidine and 4-methyl-5-(2-phosphoethyl)-thiazole: step 1/1.</text>
</comment>
<comment type="similarity">
    <text evidence="1">Belongs to the thiamine-phosphate synthase family.</text>
</comment>
<dbReference type="EC" id="2.5.1.3" evidence="1"/>
<dbReference type="EMBL" id="AF109218">
    <property type="protein sequence ID" value="AAF25544.1"/>
    <property type="molecule type" value="Genomic_DNA"/>
</dbReference>
<dbReference type="EMBL" id="AM295250">
    <property type="protein sequence ID" value="CAL28498.1"/>
    <property type="molecule type" value="Genomic_DNA"/>
</dbReference>
<dbReference type="RefSeq" id="WP_015900838.1">
    <property type="nucleotide sequence ID" value="NC_012121.1"/>
</dbReference>
<dbReference type="SMR" id="Q9RGS5"/>
<dbReference type="GeneID" id="93794048"/>
<dbReference type="KEGG" id="sca:SCA_1593"/>
<dbReference type="eggNOG" id="COG0352">
    <property type="taxonomic scope" value="Bacteria"/>
</dbReference>
<dbReference type="HOGENOM" id="CLU_018272_3_2_9"/>
<dbReference type="OrthoDB" id="9812206at2"/>
<dbReference type="BioCyc" id="SCAR396513:SCA_RS08090-MONOMER"/>
<dbReference type="UniPathway" id="UPA00060">
    <property type="reaction ID" value="UER00141"/>
</dbReference>
<dbReference type="Proteomes" id="UP000000444">
    <property type="component" value="Chromosome"/>
</dbReference>
<dbReference type="GO" id="GO:0005737">
    <property type="term" value="C:cytoplasm"/>
    <property type="evidence" value="ECO:0007669"/>
    <property type="project" value="TreeGrafter"/>
</dbReference>
<dbReference type="GO" id="GO:0000287">
    <property type="term" value="F:magnesium ion binding"/>
    <property type="evidence" value="ECO:0007669"/>
    <property type="project" value="UniProtKB-UniRule"/>
</dbReference>
<dbReference type="GO" id="GO:0004789">
    <property type="term" value="F:thiamine-phosphate diphosphorylase activity"/>
    <property type="evidence" value="ECO:0007669"/>
    <property type="project" value="UniProtKB-UniRule"/>
</dbReference>
<dbReference type="GO" id="GO:0009228">
    <property type="term" value="P:thiamine biosynthetic process"/>
    <property type="evidence" value="ECO:0007669"/>
    <property type="project" value="UniProtKB-KW"/>
</dbReference>
<dbReference type="GO" id="GO:0009229">
    <property type="term" value="P:thiamine diphosphate biosynthetic process"/>
    <property type="evidence" value="ECO:0007669"/>
    <property type="project" value="UniProtKB-UniRule"/>
</dbReference>
<dbReference type="CDD" id="cd00564">
    <property type="entry name" value="TMP_TenI"/>
    <property type="match status" value="1"/>
</dbReference>
<dbReference type="FunFam" id="3.20.20.70:FF:000096">
    <property type="entry name" value="Thiamine-phosphate synthase"/>
    <property type="match status" value="1"/>
</dbReference>
<dbReference type="Gene3D" id="3.20.20.70">
    <property type="entry name" value="Aldolase class I"/>
    <property type="match status" value="1"/>
</dbReference>
<dbReference type="HAMAP" id="MF_00097">
    <property type="entry name" value="TMP_synthase"/>
    <property type="match status" value="1"/>
</dbReference>
<dbReference type="InterPro" id="IPR013785">
    <property type="entry name" value="Aldolase_TIM"/>
</dbReference>
<dbReference type="InterPro" id="IPR036206">
    <property type="entry name" value="ThiamineP_synth_sf"/>
</dbReference>
<dbReference type="InterPro" id="IPR022998">
    <property type="entry name" value="ThiamineP_synth_TenI"/>
</dbReference>
<dbReference type="InterPro" id="IPR034291">
    <property type="entry name" value="TMP_synthase"/>
</dbReference>
<dbReference type="NCBIfam" id="TIGR00693">
    <property type="entry name" value="thiE"/>
    <property type="match status" value="1"/>
</dbReference>
<dbReference type="PANTHER" id="PTHR20857">
    <property type="entry name" value="THIAMINE-PHOSPHATE PYROPHOSPHORYLASE"/>
    <property type="match status" value="1"/>
</dbReference>
<dbReference type="PANTHER" id="PTHR20857:SF15">
    <property type="entry name" value="THIAMINE-PHOSPHATE SYNTHASE"/>
    <property type="match status" value="1"/>
</dbReference>
<dbReference type="Pfam" id="PF02581">
    <property type="entry name" value="TMP-TENI"/>
    <property type="match status" value="1"/>
</dbReference>
<dbReference type="SUPFAM" id="SSF51391">
    <property type="entry name" value="Thiamin phosphate synthase"/>
    <property type="match status" value="1"/>
</dbReference>
<organism>
    <name type="scientific">Staphylococcus carnosus (strain TM300)</name>
    <dbReference type="NCBI Taxonomy" id="396513"/>
    <lineage>
        <taxon>Bacteria</taxon>
        <taxon>Bacillati</taxon>
        <taxon>Bacillota</taxon>
        <taxon>Bacilli</taxon>
        <taxon>Bacillales</taxon>
        <taxon>Staphylococcaceae</taxon>
        <taxon>Staphylococcus</taxon>
    </lineage>
</organism>